<comment type="catalytic activity">
    <reaction>
        <text>orotidine 5'-phosphate + H(+) = UMP + CO2</text>
        <dbReference type="Rhea" id="RHEA:11596"/>
        <dbReference type="ChEBI" id="CHEBI:15378"/>
        <dbReference type="ChEBI" id="CHEBI:16526"/>
        <dbReference type="ChEBI" id="CHEBI:57538"/>
        <dbReference type="ChEBI" id="CHEBI:57865"/>
        <dbReference type="EC" id="4.1.1.23"/>
    </reaction>
</comment>
<comment type="pathway">
    <text>Pyrimidine metabolism; UMP biosynthesis via de novo pathway; UMP from orotate: step 2/2.</text>
</comment>
<comment type="similarity">
    <text evidence="2">Belongs to the OMP decarboxylase family. Type 2 subfamily.</text>
</comment>
<dbReference type="EC" id="4.1.1.23"/>
<dbReference type="EMBL" id="U01072">
    <property type="protein sequence ID" value="AAC43182.1"/>
    <property type="molecule type" value="Unassigned_DNA"/>
</dbReference>
<dbReference type="EMBL" id="LT708304">
    <property type="protein sequence ID" value="SIU00023.1"/>
    <property type="molecule type" value="Genomic_DNA"/>
</dbReference>
<dbReference type="PIR" id="B49930">
    <property type="entry name" value="B49930"/>
</dbReference>
<dbReference type="RefSeq" id="NP_855072.1">
    <property type="nucleotide sequence ID" value="NC_002945.3"/>
</dbReference>
<dbReference type="RefSeq" id="WP_003407220.1">
    <property type="nucleotide sequence ID" value="NC_002945.4"/>
</dbReference>
<dbReference type="SMR" id="P0A5M7"/>
<dbReference type="KEGG" id="mbo:BQ2027_MB1420"/>
<dbReference type="PATRIC" id="fig|233413.5.peg.1555"/>
<dbReference type="UniPathway" id="UPA00070">
    <property type="reaction ID" value="UER00120"/>
</dbReference>
<dbReference type="Proteomes" id="UP000001419">
    <property type="component" value="Chromosome"/>
</dbReference>
<dbReference type="GO" id="GO:0004590">
    <property type="term" value="F:orotidine-5'-phosphate decarboxylase activity"/>
    <property type="evidence" value="ECO:0007669"/>
    <property type="project" value="UniProtKB-UniRule"/>
</dbReference>
<dbReference type="GO" id="GO:0006207">
    <property type="term" value="P:'de novo' pyrimidine nucleobase biosynthetic process"/>
    <property type="evidence" value="ECO:0007669"/>
    <property type="project" value="InterPro"/>
</dbReference>
<dbReference type="GO" id="GO:0044205">
    <property type="term" value="P:'de novo' UMP biosynthetic process"/>
    <property type="evidence" value="ECO:0007669"/>
    <property type="project" value="UniProtKB-UniRule"/>
</dbReference>
<dbReference type="CDD" id="cd04725">
    <property type="entry name" value="OMP_decarboxylase_like"/>
    <property type="match status" value="1"/>
</dbReference>
<dbReference type="Gene3D" id="3.20.20.70">
    <property type="entry name" value="Aldolase class I"/>
    <property type="match status" value="1"/>
</dbReference>
<dbReference type="HAMAP" id="MF_01215">
    <property type="entry name" value="OMPdecase_type2"/>
    <property type="match status" value="1"/>
</dbReference>
<dbReference type="InterPro" id="IPR013785">
    <property type="entry name" value="Aldolase_TIM"/>
</dbReference>
<dbReference type="InterPro" id="IPR018089">
    <property type="entry name" value="OMPdecase_AS"/>
</dbReference>
<dbReference type="InterPro" id="IPR011995">
    <property type="entry name" value="OMPdecase_type-2"/>
</dbReference>
<dbReference type="InterPro" id="IPR001754">
    <property type="entry name" value="OMPdeCOase_dom"/>
</dbReference>
<dbReference type="InterPro" id="IPR011060">
    <property type="entry name" value="RibuloseP-bd_barrel"/>
</dbReference>
<dbReference type="NCBIfam" id="TIGR02127">
    <property type="entry name" value="pyrF_sub2"/>
    <property type="match status" value="1"/>
</dbReference>
<dbReference type="PANTHER" id="PTHR43375">
    <property type="entry name" value="OROTIDINE 5'-PHOSPHATE DECARBOXYLASE"/>
    <property type="match status" value="1"/>
</dbReference>
<dbReference type="PANTHER" id="PTHR43375:SF1">
    <property type="entry name" value="OROTIDINE 5'-PHOSPHATE DECARBOXYLASE"/>
    <property type="match status" value="1"/>
</dbReference>
<dbReference type="Pfam" id="PF00215">
    <property type="entry name" value="OMPdecase"/>
    <property type="match status" value="1"/>
</dbReference>
<dbReference type="SMART" id="SM00934">
    <property type="entry name" value="OMPdecase"/>
    <property type="match status" value="1"/>
</dbReference>
<dbReference type="SUPFAM" id="SSF51366">
    <property type="entry name" value="Ribulose-phoshate binding barrel"/>
    <property type="match status" value="1"/>
</dbReference>
<dbReference type="PROSITE" id="PS00156">
    <property type="entry name" value="OMPDECASE"/>
    <property type="match status" value="1"/>
</dbReference>
<sequence>MTGFGLRLAEAKARRGPLCLGIDPHPELLRGWDLATTADGLAAFCDICVRAFADFAVVKPQVAFFESYGAAGFAVLERTIAELRAADVLVLADAKRGDIGATMSAYATAWVGDSPLAADAVTASPYLGFGSLRPLLEVAAAHGRGVFVLAATSNPEGAAVQNAAADGRSVAQLVVDQVGAANEAAGPGPGSIGVVVGATAPQAPDLSAFTGPVLVPGVGVQGGRPEALGGLGGAASSQLLPAVAREVLRAGPGVPELRAAGERMRDAVAYLAAV</sequence>
<keyword id="KW-0210">Decarboxylase</keyword>
<keyword id="KW-0456">Lyase</keyword>
<keyword id="KW-0665">Pyrimidine biosynthesis</keyword>
<keyword id="KW-1185">Reference proteome</keyword>
<name>PYRF_MYCBO</name>
<protein>
    <recommendedName>
        <fullName>Orotidine 5'-phosphate decarboxylase</fullName>
        <ecNumber>4.1.1.23</ecNumber>
    </recommendedName>
    <alternativeName>
        <fullName>OMP decarboxylase</fullName>
        <shortName>OMPDCase</shortName>
        <shortName>OMPdecase</shortName>
    </alternativeName>
</protein>
<feature type="chain" id="PRO_0000134631" description="Orotidine 5'-phosphate decarboxylase">
    <location>
        <begin position="1"/>
        <end position="274"/>
    </location>
</feature>
<feature type="active site" description="Proton donor" evidence="1">
    <location>
        <position position="95"/>
    </location>
</feature>
<proteinExistence type="inferred from homology"/>
<evidence type="ECO:0000250" key="1"/>
<evidence type="ECO:0000305" key="2"/>
<organism>
    <name type="scientific">Mycobacterium bovis (strain ATCC BAA-935 / AF2122/97)</name>
    <dbReference type="NCBI Taxonomy" id="233413"/>
    <lineage>
        <taxon>Bacteria</taxon>
        <taxon>Bacillati</taxon>
        <taxon>Actinomycetota</taxon>
        <taxon>Actinomycetes</taxon>
        <taxon>Mycobacteriales</taxon>
        <taxon>Mycobacteriaceae</taxon>
        <taxon>Mycobacterium</taxon>
        <taxon>Mycobacterium tuberculosis complex</taxon>
    </lineage>
</organism>
<reference key="1">
    <citation type="journal article" date="1993" name="J. Bacteriol.">
        <title>The uraA locus and homologous recombination in Mycobacterium bovis BCG.</title>
        <authorList>
            <person name="Aldovini A."/>
            <person name="Husson R.N."/>
            <person name="Young R.A."/>
        </authorList>
    </citation>
    <scope>NUCLEOTIDE SEQUENCE [GENOMIC DNA]</scope>
    <source>
        <strain>BCG</strain>
    </source>
</reference>
<reference key="2">
    <citation type="journal article" date="2003" name="Proc. Natl. Acad. Sci. U.S.A.">
        <title>The complete genome sequence of Mycobacterium bovis.</title>
        <authorList>
            <person name="Garnier T."/>
            <person name="Eiglmeier K."/>
            <person name="Camus J.-C."/>
            <person name="Medina N."/>
            <person name="Mansoor H."/>
            <person name="Pryor M."/>
            <person name="Duthoy S."/>
            <person name="Grondin S."/>
            <person name="Lacroix C."/>
            <person name="Monsempe C."/>
            <person name="Simon S."/>
            <person name="Harris B."/>
            <person name="Atkin R."/>
            <person name="Doggett J."/>
            <person name="Mayes R."/>
            <person name="Keating L."/>
            <person name="Wheeler P.R."/>
            <person name="Parkhill J."/>
            <person name="Barrell B.G."/>
            <person name="Cole S.T."/>
            <person name="Gordon S.V."/>
            <person name="Hewinson R.G."/>
        </authorList>
    </citation>
    <scope>NUCLEOTIDE SEQUENCE [LARGE SCALE GENOMIC DNA]</scope>
    <source>
        <strain>ATCC BAA-935 / AF2122/97</strain>
    </source>
</reference>
<reference key="3">
    <citation type="journal article" date="2017" name="Genome Announc.">
        <title>Updated reference genome sequence and annotation of Mycobacterium bovis AF2122/97.</title>
        <authorList>
            <person name="Malone K.M."/>
            <person name="Farrell D."/>
            <person name="Stuber T.P."/>
            <person name="Schubert O.T."/>
            <person name="Aebersold R."/>
            <person name="Robbe-Austerman S."/>
            <person name="Gordon S.V."/>
        </authorList>
    </citation>
    <scope>NUCLEOTIDE SEQUENCE [LARGE SCALE GENOMIC DNA]</scope>
    <scope>GENOME REANNOTATION</scope>
    <source>
        <strain>ATCC BAA-935 / AF2122/97</strain>
    </source>
</reference>
<accession>P0A5M7</accession>
<accession>A0A1R3Y0C2</accession>
<accession>P42610</accession>
<accession>P77898</accession>
<accession>X2BHX9</accession>
<gene>
    <name type="primary">pyrF</name>
    <name type="synonym">uraA</name>
    <name type="ordered locus">BQ2027_MB1420</name>
</gene>